<dbReference type="EMBL" id="AP009049">
    <property type="protein sequence ID" value="BAH08426.1"/>
    <property type="molecule type" value="Genomic_DNA"/>
</dbReference>
<dbReference type="RefSeq" id="WP_012104135.1">
    <property type="nucleotide sequence ID" value="NC_011837.1"/>
</dbReference>
<dbReference type="SMR" id="B9DXI3"/>
<dbReference type="KEGG" id="ckr:CKR_3375"/>
<dbReference type="HOGENOM" id="CLU_052299_1_0_9"/>
<dbReference type="Proteomes" id="UP000007969">
    <property type="component" value="Chromosome"/>
</dbReference>
<dbReference type="GO" id="GO:0003677">
    <property type="term" value="F:DNA binding"/>
    <property type="evidence" value="ECO:0007669"/>
    <property type="project" value="InterPro"/>
</dbReference>
<dbReference type="CDD" id="cd22359">
    <property type="entry name" value="SfsA-like_bacterial"/>
    <property type="match status" value="1"/>
</dbReference>
<dbReference type="FunFam" id="2.40.50.580:FF:000002">
    <property type="entry name" value="Sugar fermentation stimulation protein homolog"/>
    <property type="match status" value="1"/>
</dbReference>
<dbReference type="Gene3D" id="2.40.50.580">
    <property type="match status" value="1"/>
</dbReference>
<dbReference type="Gene3D" id="3.40.1350.60">
    <property type="match status" value="1"/>
</dbReference>
<dbReference type="HAMAP" id="MF_00095">
    <property type="entry name" value="SfsA"/>
    <property type="match status" value="1"/>
</dbReference>
<dbReference type="InterPro" id="IPR005224">
    <property type="entry name" value="SfsA"/>
</dbReference>
<dbReference type="InterPro" id="IPR040452">
    <property type="entry name" value="SfsA_C"/>
</dbReference>
<dbReference type="InterPro" id="IPR041465">
    <property type="entry name" value="SfsA_N"/>
</dbReference>
<dbReference type="NCBIfam" id="TIGR00230">
    <property type="entry name" value="sfsA"/>
    <property type="match status" value="1"/>
</dbReference>
<dbReference type="PANTHER" id="PTHR30545">
    <property type="entry name" value="SUGAR FERMENTATION STIMULATION PROTEIN A"/>
    <property type="match status" value="1"/>
</dbReference>
<dbReference type="PANTHER" id="PTHR30545:SF2">
    <property type="entry name" value="SUGAR FERMENTATION STIMULATION PROTEIN A"/>
    <property type="match status" value="1"/>
</dbReference>
<dbReference type="Pfam" id="PF03749">
    <property type="entry name" value="SfsA"/>
    <property type="match status" value="1"/>
</dbReference>
<dbReference type="Pfam" id="PF17746">
    <property type="entry name" value="SfsA_N"/>
    <property type="match status" value="1"/>
</dbReference>
<accession>B9DXI3</accession>
<comment type="similarity">
    <text evidence="1">Belongs to the SfsA family.</text>
</comment>
<proteinExistence type="inferred from homology"/>
<gene>
    <name evidence="1" type="primary">sfsA</name>
    <name type="ordered locus">CKR_3375</name>
</gene>
<sequence>MIFHKNIVKAEFIRRPNRFQAYVKLNGSEVMVHVPNTGRCREILLPETTILLREENGINRKTKYDLIAGYKENKLINIDSQIPNKVVEEALENRKISYFTKYNKIEREKTFGNSRFDFKLSGDENLKCYVEVKGVTLEKEGVAMFPDAPTERGRKHLLELIEVKKSGMDAAVLFLIQMKDVKYFRPHDEMDKKFGEALRHAKENYVQVVAYDCDVGENFIILRDEIKVQL</sequence>
<organism>
    <name type="scientific">Clostridium kluyveri (strain NBRC 12016)</name>
    <dbReference type="NCBI Taxonomy" id="583346"/>
    <lineage>
        <taxon>Bacteria</taxon>
        <taxon>Bacillati</taxon>
        <taxon>Bacillota</taxon>
        <taxon>Clostridia</taxon>
        <taxon>Eubacteriales</taxon>
        <taxon>Clostridiaceae</taxon>
        <taxon>Clostridium</taxon>
    </lineage>
</organism>
<name>SFSA_CLOK1</name>
<protein>
    <recommendedName>
        <fullName evidence="1">Sugar fermentation stimulation protein homolog</fullName>
    </recommendedName>
</protein>
<reference key="1">
    <citation type="submission" date="2005-09" db="EMBL/GenBank/DDBJ databases">
        <title>Complete genome sequence of Clostridium kluyveri and comparative genomics of Clostridia species.</title>
        <authorList>
            <person name="Inui M."/>
            <person name="Nonaka H."/>
            <person name="Shinoda Y."/>
            <person name="Ikenaga Y."/>
            <person name="Abe M."/>
            <person name="Naito K."/>
            <person name="Vertes A.A."/>
            <person name="Yukawa H."/>
        </authorList>
    </citation>
    <scope>NUCLEOTIDE SEQUENCE [LARGE SCALE GENOMIC DNA]</scope>
    <source>
        <strain>NBRC 12016</strain>
    </source>
</reference>
<feature type="chain" id="PRO_1000196965" description="Sugar fermentation stimulation protein homolog">
    <location>
        <begin position="1"/>
        <end position="230"/>
    </location>
</feature>
<evidence type="ECO:0000255" key="1">
    <source>
        <dbReference type="HAMAP-Rule" id="MF_00095"/>
    </source>
</evidence>